<reference key="1">
    <citation type="journal article" date="2001" name="Proc. Natl. Acad. Sci. U.S.A.">
        <title>The complete sequence of the 1,683-kb pSymB megaplasmid from the N2-fixing endosymbiont Sinorhizobium meliloti.</title>
        <authorList>
            <person name="Finan T.M."/>
            <person name="Weidner S."/>
            <person name="Wong K."/>
            <person name="Buhrmester J."/>
            <person name="Chain P."/>
            <person name="Vorhoelter F.J."/>
            <person name="Hernandez-Lucas I."/>
            <person name="Becker A."/>
            <person name="Cowie A."/>
            <person name="Gouzy J."/>
            <person name="Golding B."/>
            <person name="Puehler A."/>
        </authorList>
    </citation>
    <scope>NUCLEOTIDE SEQUENCE [LARGE SCALE GENOMIC DNA]</scope>
    <source>
        <strain>1021</strain>
    </source>
</reference>
<reference key="2">
    <citation type="journal article" date="2001" name="Science">
        <title>The composite genome of the legume symbiont Sinorhizobium meliloti.</title>
        <authorList>
            <person name="Galibert F."/>
            <person name="Finan T.M."/>
            <person name="Long S.R."/>
            <person name="Puehler A."/>
            <person name="Abola P."/>
            <person name="Ampe F."/>
            <person name="Barloy-Hubler F."/>
            <person name="Barnett M.J."/>
            <person name="Becker A."/>
            <person name="Boistard P."/>
            <person name="Bothe G."/>
            <person name="Boutry M."/>
            <person name="Bowser L."/>
            <person name="Buhrmester J."/>
            <person name="Cadieu E."/>
            <person name="Capela D."/>
            <person name="Chain P."/>
            <person name="Cowie A."/>
            <person name="Davis R.W."/>
            <person name="Dreano S."/>
            <person name="Federspiel N.A."/>
            <person name="Fisher R.F."/>
            <person name="Gloux S."/>
            <person name="Godrie T."/>
            <person name="Goffeau A."/>
            <person name="Golding B."/>
            <person name="Gouzy J."/>
            <person name="Gurjal M."/>
            <person name="Hernandez-Lucas I."/>
            <person name="Hong A."/>
            <person name="Huizar L."/>
            <person name="Hyman R.W."/>
            <person name="Jones T."/>
            <person name="Kahn D."/>
            <person name="Kahn M.L."/>
            <person name="Kalman S."/>
            <person name="Keating D.H."/>
            <person name="Kiss E."/>
            <person name="Komp C."/>
            <person name="Lelaure V."/>
            <person name="Masuy D."/>
            <person name="Palm C."/>
            <person name="Peck M.C."/>
            <person name="Pohl T.M."/>
            <person name="Portetelle D."/>
            <person name="Purnelle B."/>
            <person name="Ramsperger U."/>
            <person name="Surzycki R."/>
            <person name="Thebault P."/>
            <person name="Vandenbol M."/>
            <person name="Vorhoelter F.J."/>
            <person name="Weidner S."/>
            <person name="Wells D.H."/>
            <person name="Wong K."/>
            <person name="Yeh K.-C."/>
            <person name="Batut J."/>
        </authorList>
    </citation>
    <scope>NUCLEOTIDE SEQUENCE [LARGE SCALE GENOMIC DNA]</scope>
    <source>
        <strain>1021</strain>
    </source>
</reference>
<sequence length="469" mass="52918">MRGLIDPDLLFPAEERTRALARRLYAEVSGLPIVSPHGHTEPRWYALDEAFPDPAQLLIVPDHYVFRMLFSQGIRLEELGVPALDGSPVETDGRAIWRRFCENYHLFRGTPTRLWFDYTLSELFGIDELPSAASSDPLYDHVAECLTRPDYRPRALYERFNIEVISTTDSALDDLGWHAKILESGWKGRVVPAYRPDAVVDPDFQGFPTNLDKLGDITGADTGTWSGYLDAHRTRRAYFKDFGATSTDHGHATADTANLPQAEAAALFDKVRLGKANADERRLFRAQMLTEMAKMSLDDGLVMQIHPGSFRNHSPAILAKFGRDKGFDIPTRTDYVTALKPLLDAVGLERDLTVILFTLDETSYARELAPLAGVYPALKLGPAWWFHDSAEGMRRFREMTTETAGFYNTVGFNDDTRAFPSIPARHDIARRVDCAFLARLVAEHRLREDEAYELARDLAYGLAKEAYRL</sequence>
<protein>
    <recommendedName>
        <fullName evidence="1">Uronate isomerase</fullName>
        <ecNumber evidence="1">5.3.1.12</ecNumber>
    </recommendedName>
    <alternativeName>
        <fullName evidence="1">Glucuronate isomerase</fullName>
    </alternativeName>
    <alternativeName>
        <fullName evidence="1">Uronic isomerase</fullName>
    </alternativeName>
</protein>
<feature type="chain" id="PRO_0000172782" description="Uronate isomerase">
    <location>
        <begin position="1"/>
        <end position="469"/>
    </location>
</feature>
<gene>
    <name evidence="1" type="primary">uxaC</name>
    <name type="ordered locus">RB0930</name>
    <name type="ORF">SMb21354</name>
</gene>
<name>UXAC_RHIME</name>
<dbReference type="EC" id="5.3.1.12" evidence="1"/>
<dbReference type="EMBL" id="AL591985">
    <property type="protein sequence ID" value="CAC49330.1"/>
    <property type="molecule type" value="Genomic_DNA"/>
</dbReference>
<dbReference type="PIR" id="B95958">
    <property type="entry name" value="B95958"/>
</dbReference>
<dbReference type="RefSeq" id="NP_437470.1">
    <property type="nucleotide sequence ID" value="NC_003078.1"/>
</dbReference>
<dbReference type="RefSeq" id="WP_010975776.1">
    <property type="nucleotide sequence ID" value="NC_003078.1"/>
</dbReference>
<dbReference type="SMR" id="Q92V04"/>
<dbReference type="EnsemblBacteria" id="CAC49330">
    <property type="protein sequence ID" value="CAC49330"/>
    <property type="gene ID" value="SM_b21354"/>
</dbReference>
<dbReference type="KEGG" id="sme:SM_b21354"/>
<dbReference type="PATRIC" id="fig|266834.11.peg.5859"/>
<dbReference type="eggNOG" id="COG1904">
    <property type="taxonomic scope" value="Bacteria"/>
</dbReference>
<dbReference type="HOGENOM" id="CLU_044465_0_0_5"/>
<dbReference type="OrthoDB" id="9766564at2"/>
<dbReference type="UniPathway" id="UPA00246"/>
<dbReference type="Proteomes" id="UP000001976">
    <property type="component" value="Plasmid pSymB"/>
</dbReference>
<dbReference type="GO" id="GO:0008880">
    <property type="term" value="F:glucuronate isomerase activity"/>
    <property type="evidence" value="ECO:0007669"/>
    <property type="project" value="UniProtKB-UniRule"/>
</dbReference>
<dbReference type="GO" id="GO:0019698">
    <property type="term" value="P:D-galacturonate catabolic process"/>
    <property type="evidence" value="ECO:0007669"/>
    <property type="project" value="TreeGrafter"/>
</dbReference>
<dbReference type="GO" id="GO:0042840">
    <property type="term" value="P:D-glucuronate catabolic process"/>
    <property type="evidence" value="ECO:0007669"/>
    <property type="project" value="TreeGrafter"/>
</dbReference>
<dbReference type="Gene3D" id="3.20.20.140">
    <property type="entry name" value="Metal-dependent hydrolases"/>
    <property type="match status" value="1"/>
</dbReference>
<dbReference type="Gene3D" id="1.10.2020.10">
    <property type="entry name" value="uronate isomerase, domain 2, chain A"/>
    <property type="match status" value="1"/>
</dbReference>
<dbReference type="HAMAP" id="MF_00675">
    <property type="entry name" value="UxaC"/>
    <property type="match status" value="1"/>
</dbReference>
<dbReference type="InterPro" id="IPR032466">
    <property type="entry name" value="Metal_Hydrolase"/>
</dbReference>
<dbReference type="InterPro" id="IPR003766">
    <property type="entry name" value="Uronate_isomerase"/>
</dbReference>
<dbReference type="NCBIfam" id="NF002794">
    <property type="entry name" value="PRK02925.1"/>
    <property type="match status" value="1"/>
</dbReference>
<dbReference type="PANTHER" id="PTHR30068">
    <property type="entry name" value="URONATE ISOMERASE"/>
    <property type="match status" value="1"/>
</dbReference>
<dbReference type="PANTHER" id="PTHR30068:SF4">
    <property type="entry name" value="URONATE ISOMERASE"/>
    <property type="match status" value="1"/>
</dbReference>
<dbReference type="Pfam" id="PF02614">
    <property type="entry name" value="UxaC"/>
    <property type="match status" value="1"/>
</dbReference>
<dbReference type="SUPFAM" id="SSF51556">
    <property type="entry name" value="Metallo-dependent hydrolases"/>
    <property type="match status" value="1"/>
</dbReference>
<evidence type="ECO:0000255" key="1">
    <source>
        <dbReference type="HAMAP-Rule" id="MF_00675"/>
    </source>
</evidence>
<comment type="catalytic activity">
    <reaction evidence="1">
        <text>D-glucuronate = D-fructuronate</text>
        <dbReference type="Rhea" id="RHEA:13049"/>
        <dbReference type="ChEBI" id="CHEBI:58720"/>
        <dbReference type="ChEBI" id="CHEBI:59863"/>
        <dbReference type="EC" id="5.3.1.12"/>
    </reaction>
</comment>
<comment type="catalytic activity">
    <reaction evidence="1">
        <text>aldehydo-D-galacturonate = keto-D-tagaturonate</text>
        <dbReference type="Rhea" id="RHEA:27702"/>
        <dbReference type="ChEBI" id="CHEBI:12952"/>
        <dbReference type="ChEBI" id="CHEBI:17886"/>
        <dbReference type="EC" id="5.3.1.12"/>
    </reaction>
</comment>
<comment type="pathway">
    <text evidence="1">Carbohydrate metabolism; pentose and glucuronate interconversion.</text>
</comment>
<comment type="similarity">
    <text evidence="1">Belongs to the metallo-dependent hydrolases superfamily. Uronate isomerase family.</text>
</comment>
<keyword id="KW-0413">Isomerase</keyword>
<keyword id="KW-0614">Plasmid</keyword>
<keyword id="KW-1185">Reference proteome</keyword>
<accession>Q92V04</accession>
<organism>
    <name type="scientific">Rhizobium meliloti (strain 1021)</name>
    <name type="common">Ensifer meliloti</name>
    <name type="synonym">Sinorhizobium meliloti</name>
    <dbReference type="NCBI Taxonomy" id="266834"/>
    <lineage>
        <taxon>Bacteria</taxon>
        <taxon>Pseudomonadati</taxon>
        <taxon>Pseudomonadota</taxon>
        <taxon>Alphaproteobacteria</taxon>
        <taxon>Hyphomicrobiales</taxon>
        <taxon>Rhizobiaceae</taxon>
        <taxon>Sinorhizobium/Ensifer group</taxon>
        <taxon>Sinorhizobium</taxon>
    </lineage>
</organism>
<proteinExistence type="inferred from homology"/>
<geneLocation type="plasmid">
    <name>pSymB</name>
    <name>megaplasmid 2</name>
</geneLocation>